<evidence type="ECO:0000255" key="1">
    <source>
        <dbReference type="HAMAP-Rule" id="MF_01575"/>
    </source>
</evidence>
<feature type="chain" id="PRO_0000318779" description="UPF0398 protein OEOE_1093">
    <location>
        <begin position="1"/>
        <end position="188"/>
    </location>
</feature>
<dbReference type="EMBL" id="CP000411">
    <property type="protein sequence ID" value="ABJ56992.1"/>
    <property type="molecule type" value="Genomic_DNA"/>
</dbReference>
<dbReference type="RefSeq" id="WP_011677619.1">
    <property type="nucleotide sequence ID" value="NC_008528.1"/>
</dbReference>
<dbReference type="SMR" id="Q04EY0"/>
<dbReference type="STRING" id="203123.OEOE_1093"/>
<dbReference type="KEGG" id="ooe:OEOE_1093"/>
<dbReference type="PATRIC" id="fig|203123.7.peg.1115"/>
<dbReference type="eggNOG" id="COG4474">
    <property type="taxonomic scope" value="Bacteria"/>
</dbReference>
<dbReference type="HOGENOM" id="CLU_105319_0_0_9"/>
<dbReference type="Proteomes" id="UP000000774">
    <property type="component" value="Chromosome"/>
</dbReference>
<dbReference type="Gene3D" id="3.40.50.450">
    <property type="match status" value="1"/>
</dbReference>
<dbReference type="HAMAP" id="MF_01575">
    <property type="entry name" value="UPF0398"/>
    <property type="match status" value="1"/>
</dbReference>
<dbReference type="InterPro" id="IPR010697">
    <property type="entry name" value="YspA"/>
</dbReference>
<dbReference type="NCBIfam" id="NF010181">
    <property type="entry name" value="PRK13660.1"/>
    <property type="match status" value="1"/>
</dbReference>
<dbReference type="PANTHER" id="PTHR38440:SF1">
    <property type="entry name" value="UPF0398 PROTEIN SPR0331"/>
    <property type="match status" value="1"/>
</dbReference>
<dbReference type="PANTHER" id="PTHR38440">
    <property type="entry name" value="UPF0398 PROTEIN YPSA"/>
    <property type="match status" value="1"/>
</dbReference>
<dbReference type="Pfam" id="PF06908">
    <property type="entry name" value="YpsA"/>
    <property type="match status" value="1"/>
</dbReference>
<dbReference type="PIRSF" id="PIRSF021290">
    <property type="entry name" value="DUF1273"/>
    <property type="match status" value="1"/>
</dbReference>
<dbReference type="SUPFAM" id="SSF102405">
    <property type="entry name" value="MCP/YpsA-like"/>
    <property type="match status" value="1"/>
</dbReference>
<organism>
    <name type="scientific">Oenococcus oeni (strain ATCC BAA-331 / PSU-1)</name>
    <dbReference type="NCBI Taxonomy" id="203123"/>
    <lineage>
        <taxon>Bacteria</taxon>
        <taxon>Bacillati</taxon>
        <taxon>Bacillota</taxon>
        <taxon>Bacilli</taxon>
        <taxon>Lactobacillales</taxon>
        <taxon>Lactobacillaceae</taxon>
        <taxon>Oenococcus</taxon>
    </lineage>
</organism>
<reference key="1">
    <citation type="journal article" date="2006" name="Proc. Natl. Acad. Sci. U.S.A.">
        <title>Comparative genomics of the lactic acid bacteria.</title>
        <authorList>
            <person name="Makarova K.S."/>
            <person name="Slesarev A."/>
            <person name="Wolf Y.I."/>
            <person name="Sorokin A."/>
            <person name="Mirkin B."/>
            <person name="Koonin E.V."/>
            <person name="Pavlov A."/>
            <person name="Pavlova N."/>
            <person name="Karamychev V."/>
            <person name="Polouchine N."/>
            <person name="Shakhova V."/>
            <person name="Grigoriev I."/>
            <person name="Lou Y."/>
            <person name="Rohksar D."/>
            <person name="Lucas S."/>
            <person name="Huang K."/>
            <person name="Goodstein D.M."/>
            <person name="Hawkins T."/>
            <person name="Plengvidhya V."/>
            <person name="Welker D."/>
            <person name="Hughes J."/>
            <person name="Goh Y."/>
            <person name="Benson A."/>
            <person name="Baldwin K."/>
            <person name="Lee J.-H."/>
            <person name="Diaz-Muniz I."/>
            <person name="Dosti B."/>
            <person name="Smeianov V."/>
            <person name="Wechter W."/>
            <person name="Barabote R."/>
            <person name="Lorca G."/>
            <person name="Altermann E."/>
            <person name="Barrangou R."/>
            <person name="Ganesan B."/>
            <person name="Xie Y."/>
            <person name="Rawsthorne H."/>
            <person name="Tamir D."/>
            <person name="Parker C."/>
            <person name="Breidt F."/>
            <person name="Broadbent J.R."/>
            <person name="Hutkins R."/>
            <person name="O'Sullivan D."/>
            <person name="Steele J."/>
            <person name="Unlu G."/>
            <person name="Saier M.H. Jr."/>
            <person name="Klaenhammer T."/>
            <person name="Richardson P."/>
            <person name="Kozyavkin S."/>
            <person name="Weimer B.C."/>
            <person name="Mills D.A."/>
        </authorList>
    </citation>
    <scope>NUCLEOTIDE SEQUENCE [LARGE SCALE GENOMIC DNA]</scope>
    <source>
        <strain>ATCC BAA-331 / PSU-1</strain>
    </source>
</reference>
<name>Y1093_OENOB</name>
<proteinExistence type="inferred from homology"/>
<gene>
    <name type="ordered locus">OEOE_1093</name>
</gene>
<accession>Q04EY0</accession>
<comment type="similarity">
    <text evidence="1">Belongs to the UPF0398 family.</text>
</comment>
<sequence>MQTRLWVTGYRSFELGAFNDKDPKIEVIKRALKENLIDQLENNGLEWIITGGQMGTEQWTCETAIGLKKDFPQLKIALMLPFSNFAANWNQEHQVKLTDLRTRVDFSEALSKESYKSPIQLRNFQAFMLKHTDGALMVYDPDNPGKAEFEYKAIQAYQLEHPDYSLKTIDFDMLTDISNEIEEEKRPW</sequence>
<protein>
    <recommendedName>
        <fullName evidence="1">UPF0398 protein OEOE_1093</fullName>
    </recommendedName>
</protein>
<keyword id="KW-1185">Reference proteome</keyword>